<dbReference type="EC" id="2.3.1.274" evidence="1"/>
<dbReference type="EMBL" id="CP000911">
    <property type="protein sequence ID" value="ABY37881.1"/>
    <property type="molecule type" value="Genomic_DNA"/>
</dbReference>
<dbReference type="RefSeq" id="WP_002963912.1">
    <property type="nucleotide sequence ID" value="NC_010169.1"/>
</dbReference>
<dbReference type="SMR" id="B0CLA1"/>
<dbReference type="GeneID" id="93016835"/>
<dbReference type="KEGG" id="bmt:BSUIS_A0810"/>
<dbReference type="HOGENOM" id="CLU_039379_1_0_5"/>
<dbReference type="UniPathway" id="UPA00085"/>
<dbReference type="Proteomes" id="UP000008545">
    <property type="component" value="Chromosome I"/>
</dbReference>
<dbReference type="GO" id="GO:0005737">
    <property type="term" value="C:cytoplasm"/>
    <property type="evidence" value="ECO:0007669"/>
    <property type="project" value="UniProtKB-SubCell"/>
</dbReference>
<dbReference type="GO" id="GO:0043811">
    <property type="term" value="F:phosphate:acyl-[acyl carrier protein] acyltransferase activity"/>
    <property type="evidence" value="ECO:0007669"/>
    <property type="project" value="UniProtKB-UniRule"/>
</dbReference>
<dbReference type="GO" id="GO:0006633">
    <property type="term" value="P:fatty acid biosynthetic process"/>
    <property type="evidence" value="ECO:0007669"/>
    <property type="project" value="UniProtKB-UniRule"/>
</dbReference>
<dbReference type="GO" id="GO:0008654">
    <property type="term" value="P:phospholipid biosynthetic process"/>
    <property type="evidence" value="ECO:0007669"/>
    <property type="project" value="UniProtKB-KW"/>
</dbReference>
<dbReference type="Gene3D" id="3.40.718.10">
    <property type="entry name" value="Isopropylmalate Dehydrogenase"/>
    <property type="match status" value="1"/>
</dbReference>
<dbReference type="HAMAP" id="MF_00019">
    <property type="entry name" value="PlsX"/>
    <property type="match status" value="1"/>
</dbReference>
<dbReference type="InterPro" id="IPR003664">
    <property type="entry name" value="FA_synthesis"/>
</dbReference>
<dbReference type="InterPro" id="IPR012281">
    <property type="entry name" value="Phospholipid_synth_PlsX-like"/>
</dbReference>
<dbReference type="NCBIfam" id="TIGR00182">
    <property type="entry name" value="plsX"/>
    <property type="match status" value="1"/>
</dbReference>
<dbReference type="PANTHER" id="PTHR30100">
    <property type="entry name" value="FATTY ACID/PHOSPHOLIPID SYNTHESIS PROTEIN PLSX"/>
    <property type="match status" value="1"/>
</dbReference>
<dbReference type="PANTHER" id="PTHR30100:SF1">
    <property type="entry name" value="PHOSPHATE ACYLTRANSFERASE"/>
    <property type="match status" value="1"/>
</dbReference>
<dbReference type="Pfam" id="PF02504">
    <property type="entry name" value="FA_synthesis"/>
    <property type="match status" value="1"/>
</dbReference>
<dbReference type="PIRSF" id="PIRSF002465">
    <property type="entry name" value="Phsphlp_syn_PlsX"/>
    <property type="match status" value="1"/>
</dbReference>
<dbReference type="SUPFAM" id="SSF53659">
    <property type="entry name" value="Isocitrate/Isopropylmalate dehydrogenase-like"/>
    <property type="match status" value="1"/>
</dbReference>
<reference key="1">
    <citation type="submission" date="2007-12" db="EMBL/GenBank/DDBJ databases">
        <title>Brucella suis ATCC 23445 whole genome shotgun sequencing project.</title>
        <authorList>
            <person name="Setubal J.C."/>
            <person name="Bowns C."/>
            <person name="Boyle S."/>
            <person name="Crasta O.R."/>
            <person name="Czar M.J."/>
            <person name="Dharmanolla C."/>
            <person name="Gillespie J.J."/>
            <person name="Kenyon R.W."/>
            <person name="Lu J."/>
            <person name="Mane S."/>
            <person name="Mohapatra S."/>
            <person name="Nagrani S."/>
            <person name="Purkayastha A."/>
            <person name="Rajasimha H.K."/>
            <person name="Shallom J.M."/>
            <person name="Shallom S."/>
            <person name="Shukla M."/>
            <person name="Snyder E.E."/>
            <person name="Sobral B.W."/>
            <person name="Wattam A.R."/>
            <person name="Will R."/>
            <person name="Williams K."/>
            <person name="Yoo H."/>
            <person name="Bruce D."/>
            <person name="Detter C."/>
            <person name="Munk C."/>
            <person name="Brettin T.S."/>
        </authorList>
    </citation>
    <scope>NUCLEOTIDE SEQUENCE [LARGE SCALE GENOMIC DNA]</scope>
    <source>
        <strain>ATCC 23445 / NCTC 10510</strain>
    </source>
</reference>
<proteinExistence type="inferred from homology"/>
<protein>
    <recommendedName>
        <fullName evidence="1">Phosphate acyltransferase</fullName>
        <ecNumber evidence="1">2.3.1.274</ecNumber>
    </recommendedName>
    <alternativeName>
        <fullName evidence="1">Acyl-ACP phosphotransacylase</fullName>
    </alternativeName>
    <alternativeName>
        <fullName evidence="1">Acyl-[acyl-carrier-protein]--phosphate acyltransferase</fullName>
    </alternativeName>
    <alternativeName>
        <fullName evidence="1">Phosphate-acyl-ACP acyltransferase</fullName>
    </alternativeName>
</protein>
<comment type="function">
    <text evidence="1">Catalyzes the reversible formation of acyl-phosphate (acyl-PO(4)) from acyl-[acyl-carrier-protein] (acyl-ACP). This enzyme utilizes acyl-ACP as fatty acyl donor, but not acyl-CoA.</text>
</comment>
<comment type="catalytic activity">
    <reaction evidence="1">
        <text>a fatty acyl-[ACP] + phosphate = an acyl phosphate + holo-[ACP]</text>
        <dbReference type="Rhea" id="RHEA:42292"/>
        <dbReference type="Rhea" id="RHEA-COMP:9685"/>
        <dbReference type="Rhea" id="RHEA-COMP:14125"/>
        <dbReference type="ChEBI" id="CHEBI:43474"/>
        <dbReference type="ChEBI" id="CHEBI:59918"/>
        <dbReference type="ChEBI" id="CHEBI:64479"/>
        <dbReference type="ChEBI" id="CHEBI:138651"/>
        <dbReference type="EC" id="2.3.1.274"/>
    </reaction>
</comment>
<comment type="pathway">
    <text evidence="1">Lipid metabolism; phospholipid metabolism.</text>
</comment>
<comment type="subunit">
    <text evidence="1">Homodimer. Probably interacts with PlsY.</text>
</comment>
<comment type="subcellular location">
    <subcellularLocation>
        <location evidence="1">Cytoplasm</location>
    </subcellularLocation>
    <text evidence="1">Associated with the membrane possibly through PlsY.</text>
</comment>
<comment type="similarity">
    <text evidence="1">Belongs to the PlsX family.</text>
</comment>
<evidence type="ECO:0000255" key="1">
    <source>
        <dbReference type="HAMAP-Rule" id="MF_00019"/>
    </source>
</evidence>
<gene>
    <name evidence="1" type="primary">plsX</name>
    <name type="ordered locus">BSUIS_A0810</name>
</gene>
<accession>B0CLA1</accession>
<keyword id="KW-0963">Cytoplasm</keyword>
<keyword id="KW-0444">Lipid biosynthesis</keyword>
<keyword id="KW-0443">Lipid metabolism</keyword>
<keyword id="KW-0594">Phospholipid biosynthesis</keyword>
<keyword id="KW-1208">Phospholipid metabolism</keyword>
<keyword id="KW-0808">Transferase</keyword>
<feature type="chain" id="PRO_1000074159" description="Phosphate acyltransferase">
    <location>
        <begin position="1"/>
        <end position="346"/>
    </location>
</feature>
<organism>
    <name type="scientific">Brucella suis (strain ATCC 23445 / NCTC 10510)</name>
    <dbReference type="NCBI Taxonomy" id="470137"/>
    <lineage>
        <taxon>Bacteria</taxon>
        <taxon>Pseudomonadati</taxon>
        <taxon>Pseudomonadota</taxon>
        <taxon>Alphaproteobacteria</taxon>
        <taxon>Hyphomicrobiales</taxon>
        <taxon>Brucellaceae</taxon>
        <taxon>Brucella/Ochrobactrum group</taxon>
        <taxon>Brucella</taxon>
    </lineage>
</organism>
<name>PLSX_BRUSI</name>
<sequence>MIKISIDAMGGDFGPEVVIPGAAKAFERHPDIRFIFFGLPAQVEPVLARYPKLKEASEFRASEVAIGMDDKPSQALRAGRGKSSMWQAIEAVKTGDADACVSAGNTGALMAMSKFCLRMMSDVERPAIAGIWPTLRGESIVLDIGATIGADARQLVDYAVMGAGMARALFEVRKPTVGLLNVGTEEVKGLDEIKEAGQILRDTPLDGLEYSGFVEGNDIGKGTVDVVVTEGFTGNIALKTAEGTARQMAELLRQAMSRTLLAKIGYVFAKGAFDRLREKMDPNKVNGGVFLGLSGIVIKSHGGANAEGFCSAVEVGYDMVRNRLLEKIEADLAHFHHSHSHVSSKA</sequence>